<sequence>MTVALALRDGCRRISTMTRQYGVTTQRHLISPVVFDITPLGRRPGAIIALQKTVPSLARIGLELVVIEWGAPINLDLRVESVSEDVLVAGTVTAPTVSECVRCLTAVHGHVQVTLNQLFAYPYSATKVTTEEDAVGHVVDGTIDLEQSIIDAVGIELPFAPMCRSDCPGLCAECGTSLVVEPGHPHDRIDPWWAKLTDMLAPDVPQTSETDGSRSEW</sequence>
<reference key="1">
    <citation type="journal article" date="2001" name="Nature">
        <title>Massive gene decay in the leprosy bacillus.</title>
        <authorList>
            <person name="Cole S.T."/>
            <person name="Eiglmeier K."/>
            <person name="Parkhill J."/>
            <person name="James K.D."/>
            <person name="Thomson N.R."/>
            <person name="Wheeler P.R."/>
            <person name="Honore N."/>
            <person name="Garnier T."/>
            <person name="Churcher C.M."/>
            <person name="Harris D.E."/>
            <person name="Mungall K.L."/>
            <person name="Basham D."/>
            <person name="Brown D."/>
            <person name="Chillingworth T."/>
            <person name="Connor R."/>
            <person name="Davies R.M."/>
            <person name="Devlin K."/>
            <person name="Duthoy S."/>
            <person name="Feltwell T."/>
            <person name="Fraser A."/>
            <person name="Hamlin N."/>
            <person name="Holroyd S."/>
            <person name="Hornsby T."/>
            <person name="Jagels K."/>
            <person name="Lacroix C."/>
            <person name="Maclean J."/>
            <person name="Moule S."/>
            <person name="Murphy L.D."/>
            <person name="Oliver K."/>
            <person name="Quail M.A."/>
            <person name="Rajandream M.A."/>
            <person name="Rutherford K.M."/>
            <person name="Rutter S."/>
            <person name="Seeger K."/>
            <person name="Simon S."/>
            <person name="Simmonds M."/>
            <person name="Skelton J."/>
            <person name="Squares R."/>
            <person name="Squares S."/>
            <person name="Stevens K."/>
            <person name="Taylor K."/>
            <person name="Whitehead S."/>
            <person name="Woodward J.R."/>
            <person name="Barrell B.G."/>
        </authorList>
    </citation>
    <scope>NUCLEOTIDE SEQUENCE [LARGE SCALE GENOMIC DNA]</scope>
    <source>
        <strain>TN</strain>
    </source>
</reference>
<keyword id="KW-1185">Reference proteome</keyword>
<accession>O69468</accession>
<organism>
    <name type="scientific">Mycobacterium leprae (strain TN)</name>
    <dbReference type="NCBI Taxonomy" id="272631"/>
    <lineage>
        <taxon>Bacteria</taxon>
        <taxon>Bacillati</taxon>
        <taxon>Actinomycetota</taxon>
        <taxon>Actinomycetes</taxon>
        <taxon>Mycobacteriales</taxon>
        <taxon>Mycobacteriaceae</taxon>
        <taxon>Mycobacterium</taxon>
    </lineage>
</organism>
<protein>
    <recommendedName>
        <fullName>Uncharacterized protein ML1660</fullName>
    </recommendedName>
</protein>
<evidence type="ECO:0000305" key="1"/>
<dbReference type="EMBL" id="AL023635">
    <property type="protein sequence ID" value="CAA19195.1"/>
    <property type="molecule type" value="Genomic_DNA"/>
</dbReference>
<dbReference type="EMBL" id="AL583923">
    <property type="protein sequence ID" value="CAC30613.1"/>
    <property type="molecule type" value="Genomic_DNA"/>
</dbReference>
<dbReference type="PIR" id="T44705">
    <property type="entry name" value="T44705"/>
</dbReference>
<dbReference type="RefSeq" id="NP_302141.1">
    <property type="nucleotide sequence ID" value="NC_002677.1"/>
</dbReference>
<dbReference type="RefSeq" id="WP_010908462.1">
    <property type="nucleotide sequence ID" value="NC_002677.1"/>
</dbReference>
<dbReference type="STRING" id="272631.gene:17575503"/>
<dbReference type="KEGG" id="mle:ML1660"/>
<dbReference type="PATRIC" id="fig|272631.5.peg.3129"/>
<dbReference type="Leproma" id="ML1660"/>
<dbReference type="eggNOG" id="COG1399">
    <property type="taxonomic scope" value="Bacteria"/>
</dbReference>
<dbReference type="HOGENOM" id="CLU_100236_0_0_11"/>
<dbReference type="OrthoDB" id="9790372at2"/>
<dbReference type="Proteomes" id="UP000000806">
    <property type="component" value="Chromosome"/>
</dbReference>
<dbReference type="InterPro" id="IPR003772">
    <property type="entry name" value="YceD"/>
</dbReference>
<dbReference type="PANTHER" id="PTHR34374">
    <property type="entry name" value="LARGE RIBOSOMAL RNA SUBUNIT ACCUMULATION PROTEIN YCED HOMOLOG 1, CHLOROPLASTIC"/>
    <property type="match status" value="1"/>
</dbReference>
<dbReference type="PANTHER" id="PTHR34374:SF1">
    <property type="entry name" value="LARGE RIBOSOMAL RNA SUBUNIT ACCUMULATION PROTEIN YCED HOMOLOG 1, CHLOROPLASTIC"/>
    <property type="match status" value="1"/>
</dbReference>
<dbReference type="Pfam" id="PF02620">
    <property type="entry name" value="YceD"/>
    <property type="match status" value="1"/>
</dbReference>
<feature type="chain" id="PRO_0000104108" description="Uncharacterized protein ML1660">
    <location>
        <begin position="1"/>
        <end position="217"/>
    </location>
</feature>
<proteinExistence type="predicted"/>
<gene>
    <name type="ordered locus">ML1660</name>
    <name type="ORF">MLCB1243.14</name>
</gene>
<name>Y1660_MYCLE</name>
<comment type="similarity">
    <text evidence="1">To M.tuberculosis Rv2926c.</text>
</comment>